<comment type="function">
    <text evidence="1">Catalyzes the deimination of arginine residues of proteins.</text>
</comment>
<comment type="catalytic activity">
    <reaction evidence="1">
        <text>L-arginyl-[protein] + H2O = L-citrullyl-[protein] + NH4(+)</text>
        <dbReference type="Rhea" id="RHEA:18089"/>
        <dbReference type="Rhea" id="RHEA-COMP:10532"/>
        <dbReference type="Rhea" id="RHEA-COMP:10588"/>
        <dbReference type="ChEBI" id="CHEBI:15377"/>
        <dbReference type="ChEBI" id="CHEBI:28938"/>
        <dbReference type="ChEBI" id="CHEBI:29965"/>
        <dbReference type="ChEBI" id="CHEBI:83397"/>
        <dbReference type="EC" id="3.5.3.15"/>
    </reaction>
</comment>
<comment type="cofactor">
    <cofactor evidence="1">
        <name>Ca(2+)</name>
        <dbReference type="ChEBI" id="CHEBI:29108"/>
    </cofactor>
    <text evidence="1">Binding of Ca(2+) triggers a conformation change that is essential for catalytic activity.</text>
</comment>
<comment type="subunit">
    <text evidence="1">Homodimer.</text>
</comment>
<comment type="subcellular location">
    <subcellularLocation>
        <location evidence="1">Cytoplasm</location>
    </subcellularLocation>
</comment>
<comment type="tissue specificity">
    <text evidence="2">Spinal cord, submaxillary gland, cerebrum, cerebellum, and skeletal muscle.</text>
</comment>
<comment type="similarity">
    <text evidence="3">Belongs to the protein arginine deiminase family.</text>
</comment>
<organism>
    <name type="scientific">Rattus norvegicus</name>
    <name type="common">Rat</name>
    <dbReference type="NCBI Taxonomy" id="10116"/>
    <lineage>
        <taxon>Eukaryota</taxon>
        <taxon>Metazoa</taxon>
        <taxon>Chordata</taxon>
        <taxon>Craniata</taxon>
        <taxon>Vertebrata</taxon>
        <taxon>Euteleostomi</taxon>
        <taxon>Mammalia</taxon>
        <taxon>Eutheria</taxon>
        <taxon>Euarchontoglires</taxon>
        <taxon>Glires</taxon>
        <taxon>Rodentia</taxon>
        <taxon>Myomorpha</taxon>
        <taxon>Muroidea</taxon>
        <taxon>Muridae</taxon>
        <taxon>Murinae</taxon>
        <taxon>Rattus</taxon>
    </lineage>
</organism>
<keyword id="KW-0106">Calcium</keyword>
<keyword id="KW-0963">Cytoplasm</keyword>
<keyword id="KW-0903">Direct protein sequencing</keyword>
<keyword id="KW-0378">Hydrolase</keyword>
<keyword id="KW-0479">Metal-binding</keyword>
<keyword id="KW-1185">Reference proteome</keyword>
<proteinExistence type="evidence at protein level"/>
<evidence type="ECO:0000250" key="1">
    <source>
        <dbReference type="UniProtKB" id="Q9Y2J8"/>
    </source>
</evidence>
<evidence type="ECO:0000269" key="2">
    <source>
    </source>
</evidence>
<evidence type="ECO:0000305" key="3"/>
<accession>P20717</accession>
<feature type="chain" id="PRO_0000220028" description="Protein-arginine deiminase type-2">
    <location>
        <begin position="1"/>
        <end position="665"/>
    </location>
</feature>
<feature type="active site" description="Nucleophile" evidence="1">
    <location>
        <position position="647"/>
    </location>
</feature>
<feature type="binding site" evidence="1">
    <location>
        <position position="123"/>
    </location>
    <ligand>
        <name>Ca(2+)</name>
        <dbReference type="ChEBI" id="CHEBI:29108"/>
        <label>1</label>
    </ligand>
</feature>
<feature type="binding site" evidence="1">
    <location>
        <position position="125"/>
    </location>
    <ligand>
        <name>Ca(2+)</name>
        <dbReference type="ChEBI" id="CHEBI:29108"/>
        <label>1</label>
    </ligand>
</feature>
<feature type="binding site" evidence="1">
    <location>
        <position position="127"/>
    </location>
    <ligand>
        <name>Ca(2+)</name>
        <dbReference type="ChEBI" id="CHEBI:29108"/>
        <label>1</label>
    </ligand>
</feature>
<feature type="binding site" evidence="1">
    <location>
        <position position="131"/>
    </location>
    <ligand>
        <name>Ca(2+)</name>
        <dbReference type="ChEBI" id="CHEBI:29108"/>
        <label>1</label>
    </ligand>
</feature>
<feature type="binding site" evidence="1">
    <location>
        <position position="154"/>
    </location>
    <ligand>
        <name>Ca(2+)</name>
        <dbReference type="ChEBI" id="CHEBI:29108"/>
        <label>2</label>
    </ligand>
</feature>
<feature type="binding site" evidence="1">
    <location>
        <position position="156"/>
    </location>
    <ligand>
        <name>Ca(2+)</name>
        <dbReference type="ChEBI" id="CHEBI:29108"/>
        <label>2</label>
    </ligand>
</feature>
<feature type="binding site" evidence="1">
    <location>
        <position position="156"/>
    </location>
    <ligand>
        <name>Ca(2+)</name>
        <dbReference type="ChEBI" id="CHEBI:29108"/>
        <label>3</label>
    </ligand>
</feature>
<feature type="binding site" evidence="1">
    <location>
        <position position="158"/>
    </location>
    <ligand>
        <name>Ca(2+)</name>
        <dbReference type="ChEBI" id="CHEBI:29108"/>
        <label>2</label>
    </ligand>
</feature>
<feature type="binding site" evidence="1">
    <location>
        <position position="158"/>
    </location>
    <ligand>
        <name>Ca(2+)</name>
        <dbReference type="ChEBI" id="CHEBI:29108"/>
        <label>3</label>
    </ligand>
</feature>
<feature type="binding site" evidence="1">
    <location>
        <position position="166"/>
    </location>
    <ligand>
        <name>Ca(2+)</name>
        <dbReference type="ChEBI" id="CHEBI:29108"/>
        <label>2</label>
    </ligand>
</feature>
<feature type="binding site" evidence="1">
    <location>
        <position position="166"/>
    </location>
    <ligand>
        <name>Ca(2+)</name>
        <dbReference type="ChEBI" id="CHEBI:29108"/>
        <label>4</label>
    </ligand>
</feature>
<feature type="binding site" evidence="1">
    <location>
        <position position="169"/>
    </location>
    <ligand>
        <name>Ca(2+)</name>
        <dbReference type="ChEBI" id="CHEBI:29108"/>
        <label>4</label>
    </ligand>
</feature>
<feature type="binding site" evidence="1">
    <location>
        <position position="171"/>
    </location>
    <ligand>
        <name>Ca(2+)</name>
        <dbReference type="ChEBI" id="CHEBI:29108"/>
        <label>4</label>
    </ligand>
</feature>
<feature type="binding site" evidence="1">
    <location>
        <position position="177"/>
    </location>
    <ligand>
        <name>Ca(2+)</name>
        <dbReference type="ChEBI" id="CHEBI:29108"/>
        <label>2</label>
    </ligand>
</feature>
<feature type="binding site" evidence="1">
    <location>
        <position position="180"/>
    </location>
    <ligand>
        <name>Ca(2+)</name>
        <dbReference type="ChEBI" id="CHEBI:29108"/>
        <label>2</label>
    </ligand>
</feature>
<feature type="binding site" evidence="1">
    <location>
        <position position="180"/>
    </location>
    <ligand>
        <name>Ca(2+)</name>
        <dbReference type="ChEBI" id="CHEBI:29108"/>
        <label>3</label>
    </ligand>
</feature>
<feature type="binding site" evidence="1">
    <location>
        <position position="354"/>
    </location>
    <ligand>
        <name>Ca(2+)</name>
        <dbReference type="ChEBI" id="CHEBI:29108"/>
        <label>5</label>
    </ligand>
</feature>
<feature type="binding site" evidence="1">
    <location>
        <position position="389"/>
    </location>
    <ligand>
        <name>Ca(2+)</name>
        <dbReference type="ChEBI" id="CHEBI:29108"/>
        <label>3</label>
    </ligand>
</feature>
<feature type="binding site" evidence="1">
    <location>
        <position position="408"/>
    </location>
    <ligand>
        <name>Ca(2+)</name>
        <dbReference type="ChEBI" id="CHEBI:29108"/>
        <label>5</label>
    </ligand>
</feature>
<feature type="binding site" evidence="1">
    <location>
        <position position="411"/>
    </location>
    <ligand>
        <name>Ca(2+)</name>
        <dbReference type="ChEBI" id="CHEBI:29108"/>
        <label>5</label>
    </ligand>
</feature>
<feature type="binding site" evidence="1">
    <location>
        <position position="412"/>
    </location>
    <ligand>
        <name>Ca(2+)</name>
        <dbReference type="ChEBI" id="CHEBI:29108"/>
        <label>5</label>
    </ligand>
</feature>
<protein>
    <recommendedName>
        <fullName>Protein-arginine deiminase type-2</fullName>
        <ecNumber evidence="1">3.5.3.15</ecNumber>
    </recommendedName>
    <alternativeName>
        <fullName>Peptidylarginine deiminase II</fullName>
    </alternativeName>
    <alternativeName>
        <fullName>Protein-arginine deiminase type II</fullName>
    </alternativeName>
</protein>
<reference key="1">
    <citation type="journal article" date="1989" name="J. Biol. Chem.">
        <title>Isolation and characterization of cDNA clones encoding rat skeletal muscle peptidylarginine deiminase.</title>
        <authorList>
            <person name="Watanabe K."/>
            <person name="Senshu T."/>
        </authorList>
    </citation>
    <scope>NUCLEOTIDE SEQUENCE [MRNA]</scope>
    <scope>PARTIAL PROTEIN SEQUENCE</scope>
    <scope>TISSUE SPECIFICITY</scope>
    <source>
        <tissue>Skeletal muscle</tissue>
    </source>
</reference>
<reference key="2">
    <citation type="journal article" date="1992" name="Gene">
        <title>The rat peptidylarginine deiminase-encoding gene: structural analysis and the 5'-flanking sequence.</title>
        <authorList>
            <person name="Watanabe K."/>
            <person name="Nomoto M."/>
            <person name="Nagata S."/>
            <person name="Itoh Y."/>
            <person name="Hikichi K."/>
            <person name="Maruyama N."/>
            <person name="Mita T."/>
            <person name="Senshu T."/>
        </authorList>
    </citation>
    <scope>NUCLEOTIDE SEQUENCE [GENOMIC DNA] OF 1-14</scope>
</reference>
<sequence length="665" mass="75356">MLRERTVRLQYGSRVEAVYVLGTQLWTDVYSAAPAGAKTFSLKHSEGVKVEVVRDGEAEEVVTNGKQRWALSPSTTLRLSMAQASTEASSDKVTVNYYEEDGSAPIDQAGLFLTAIEISLDVDADRDGEVEKNNPKKASWTWGPEGQGAILLVNCDRDTPWLPKEDCSDEKVYSKQDLQDMSQMILRTKGPDRLPAGYEIVLYISMSDSDKVGVFYVENPFFGQRYIHILGRQKLYHVVKYTGGSAELLFFVEGLRFPDESFSGLVSIHVSLLEYMAEDIPLTPIFTDTVTFRIAPWIMTPNILPPVSVFVCCMKDNYLFLKEVKNLVEKTNCELKVCFQYMNRGDRWIQDEIEFGYIEAPHKGFPVVLDSPRDGNLKDFPIKQLLGPDFGYVTREPLFETVTSLDSFGNLEVSPPVTVNGKAYPLGRILIGSSFPLSGGRRMTKVVRDFLQAQQVQAPVELYSDWLTVGHVDEFMTFVPIPGKKEFRLLMASTSACYQLFREKQKEGHGEAIMFKGLGGMSSKRITINKILSNESLTQENQYFQRCLDWNRDILKKELALTEKDIIDLPALFKMDEDRQARAFFPNMVNMIVLDKDLGIPKPFGPQVEEECCLETHVRGLLEPLGLACTFIDDISAYHKFLGEVHCGTNVRRKPFTFKWWHMVP</sequence>
<gene>
    <name type="primary">Padi2</name>
    <name type="synonym">Pad2</name>
    <name type="synonym">Pdi</name>
    <name type="synonym">Pdi2</name>
</gene>
<name>PADI2_RAT</name>
<dbReference type="EC" id="3.5.3.15" evidence="1"/>
<dbReference type="EMBL" id="J05022">
    <property type="protein sequence ID" value="AAA41793.1"/>
    <property type="molecule type" value="mRNA"/>
</dbReference>
<dbReference type="EMBL" id="D10459">
    <property type="protein sequence ID" value="BAA01253.1"/>
    <property type="molecule type" value="Genomic_DNA"/>
</dbReference>
<dbReference type="PIR" id="A34339">
    <property type="entry name" value="DIRTR1"/>
</dbReference>
<dbReference type="RefSeq" id="NP_058922.1">
    <property type="nucleotide sequence ID" value="NM_017226.1"/>
</dbReference>
<dbReference type="SMR" id="P20717"/>
<dbReference type="CORUM" id="P20717"/>
<dbReference type="FunCoup" id="P20717">
    <property type="interactions" value="224"/>
</dbReference>
<dbReference type="STRING" id="10116.ENSRNOP00000010183"/>
<dbReference type="iPTMnet" id="P20717"/>
<dbReference type="PhosphoSitePlus" id="P20717"/>
<dbReference type="PaxDb" id="10116-ENSRNOP00000010183"/>
<dbReference type="GeneID" id="29511"/>
<dbReference type="KEGG" id="rno:29511"/>
<dbReference type="UCSC" id="RGD:3288">
    <property type="organism name" value="rat"/>
</dbReference>
<dbReference type="AGR" id="RGD:3288"/>
<dbReference type="CTD" id="11240"/>
<dbReference type="RGD" id="3288">
    <property type="gene designation" value="Padi2"/>
</dbReference>
<dbReference type="eggNOG" id="ENOG502QVJA">
    <property type="taxonomic scope" value="Eukaryota"/>
</dbReference>
<dbReference type="InParanoid" id="P20717"/>
<dbReference type="PhylomeDB" id="P20717"/>
<dbReference type="BRENDA" id="3.5.3.15">
    <property type="organism ID" value="5301"/>
</dbReference>
<dbReference type="Reactome" id="R-RNO-3247509">
    <property type="pathway name" value="Chromatin modifying enzymes"/>
</dbReference>
<dbReference type="Reactome" id="R-RNO-6798695">
    <property type="pathway name" value="Neutrophil degranulation"/>
</dbReference>
<dbReference type="PRO" id="PR:P20717"/>
<dbReference type="Proteomes" id="UP000002494">
    <property type="component" value="Unplaced"/>
</dbReference>
<dbReference type="GO" id="GO:0005737">
    <property type="term" value="C:cytoplasm"/>
    <property type="evidence" value="ECO:0000266"/>
    <property type="project" value="RGD"/>
</dbReference>
<dbReference type="GO" id="GO:0000791">
    <property type="term" value="C:euchromatin"/>
    <property type="evidence" value="ECO:0000266"/>
    <property type="project" value="RGD"/>
</dbReference>
<dbReference type="GO" id="GO:0005634">
    <property type="term" value="C:nucleus"/>
    <property type="evidence" value="ECO:0000318"/>
    <property type="project" value="GO_Central"/>
</dbReference>
<dbReference type="GO" id="GO:0005509">
    <property type="term" value="F:calcium ion binding"/>
    <property type="evidence" value="ECO:0007669"/>
    <property type="project" value="InterPro"/>
</dbReference>
<dbReference type="GO" id="GO:0140794">
    <property type="term" value="F:histone arginine deiminase activity"/>
    <property type="evidence" value="ECO:0000318"/>
    <property type="project" value="GO_Central"/>
</dbReference>
<dbReference type="GO" id="GO:0140798">
    <property type="term" value="F:histone H3R26 arginine deiminase activity"/>
    <property type="evidence" value="ECO:0000266"/>
    <property type="project" value="RGD"/>
</dbReference>
<dbReference type="GO" id="GO:0030331">
    <property type="term" value="F:nuclear estrogen receptor binding"/>
    <property type="evidence" value="ECO:0000266"/>
    <property type="project" value="RGD"/>
</dbReference>
<dbReference type="GO" id="GO:0042803">
    <property type="term" value="F:protein homodimerization activity"/>
    <property type="evidence" value="ECO:0000250"/>
    <property type="project" value="UniProtKB"/>
</dbReference>
<dbReference type="GO" id="GO:0004668">
    <property type="term" value="F:protein-arginine deiminase activity"/>
    <property type="evidence" value="ECO:0000314"/>
    <property type="project" value="UniProtKB"/>
</dbReference>
<dbReference type="GO" id="GO:1990830">
    <property type="term" value="P:cellular response to leukemia inhibitory factor"/>
    <property type="evidence" value="ECO:0000266"/>
    <property type="project" value="RGD"/>
</dbReference>
<dbReference type="GO" id="GO:0006338">
    <property type="term" value="P:chromatin remodeling"/>
    <property type="evidence" value="ECO:0000318"/>
    <property type="project" value="GO_Central"/>
</dbReference>
<dbReference type="GO" id="GO:0030520">
    <property type="term" value="P:estrogen receptor signaling pathway"/>
    <property type="evidence" value="ECO:0000266"/>
    <property type="project" value="RGD"/>
</dbReference>
<dbReference type="GO" id="GO:0070100">
    <property type="term" value="P:negative regulation of chemokine-mediated signaling pathway"/>
    <property type="evidence" value="ECO:0000266"/>
    <property type="project" value="RGD"/>
</dbReference>
<dbReference type="GO" id="GO:1901624">
    <property type="term" value="P:negative regulation of lymphocyte chemotaxis"/>
    <property type="evidence" value="ECO:0000266"/>
    <property type="project" value="RGD"/>
</dbReference>
<dbReference type="GO" id="GO:0045815">
    <property type="term" value="P:transcription initiation-coupled chromatin remodeling"/>
    <property type="evidence" value="ECO:0000266"/>
    <property type="project" value="RGD"/>
</dbReference>
<dbReference type="CDD" id="cd04214">
    <property type="entry name" value="PAD_N"/>
    <property type="match status" value="1"/>
</dbReference>
<dbReference type="FunFam" id="2.60.40.1700:FF:000001">
    <property type="entry name" value="Protein-arginine deiminase type-2"/>
    <property type="match status" value="1"/>
</dbReference>
<dbReference type="FunFam" id="2.60.40.1860:FF:000001">
    <property type="entry name" value="Protein-arginine deiminase type-2"/>
    <property type="match status" value="1"/>
</dbReference>
<dbReference type="FunFam" id="3.75.10.10:FF:000003">
    <property type="entry name" value="Protein-arginine deiminase type-2"/>
    <property type="match status" value="1"/>
</dbReference>
<dbReference type="Gene3D" id="3.75.10.10">
    <property type="entry name" value="L-arginine/glycine Amidinotransferase, Chain A"/>
    <property type="match status" value="1"/>
</dbReference>
<dbReference type="Gene3D" id="2.60.40.1700">
    <property type="entry name" value="Protein-arginine deiminase, central domain"/>
    <property type="match status" value="1"/>
</dbReference>
<dbReference type="Gene3D" id="2.60.40.1860">
    <property type="entry name" value="Protein-arginine deiminase, N-terminal domain"/>
    <property type="match status" value="1"/>
</dbReference>
<dbReference type="InterPro" id="IPR008972">
    <property type="entry name" value="Cupredoxin"/>
</dbReference>
<dbReference type="InterPro" id="IPR004303">
    <property type="entry name" value="PAD"/>
</dbReference>
<dbReference type="InterPro" id="IPR013530">
    <property type="entry name" value="PAD_C"/>
</dbReference>
<dbReference type="InterPro" id="IPR036556">
    <property type="entry name" value="PAD_central_sf"/>
</dbReference>
<dbReference type="InterPro" id="IPR013732">
    <property type="entry name" value="PAD_N"/>
</dbReference>
<dbReference type="InterPro" id="IPR038685">
    <property type="entry name" value="PAD_N_sf"/>
</dbReference>
<dbReference type="InterPro" id="IPR013733">
    <property type="entry name" value="Prot_Arg_deaminase_cen_dom"/>
</dbReference>
<dbReference type="PANTHER" id="PTHR10837">
    <property type="entry name" value="PEPTIDYLARGININE DEIMINASE"/>
    <property type="match status" value="1"/>
</dbReference>
<dbReference type="PANTHER" id="PTHR10837:SF12">
    <property type="entry name" value="PROTEIN-ARGININE DEIMINASE TYPE-2"/>
    <property type="match status" value="1"/>
</dbReference>
<dbReference type="Pfam" id="PF03068">
    <property type="entry name" value="PAD"/>
    <property type="match status" value="1"/>
</dbReference>
<dbReference type="Pfam" id="PF08527">
    <property type="entry name" value="PAD_M"/>
    <property type="match status" value="1"/>
</dbReference>
<dbReference type="Pfam" id="PF08526">
    <property type="entry name" value="PAD_N"/>
    <property type="match status" value="1"/>
</dbReference>
<dbReference type="PIRSF" id="PIRSF001247">
    <property type="entry name" value="Protein-arginine_deiminase"/>
    <property type="match status" value="1"/>
</dbReference>
<dbReference type="SUPFAM" id="SSF49503">
    <property type="entry name" value="Cupredoxins"/>
    <property type="match status" value="1"/>
</dbReference>
<dbReference type="SUPFAM" id="SSF55909">
    <property type="entry name" value="Pentein"/>
    <property type="match status" value="1"/>
</dbReference>
<dbReference type="SUPFAM" id="SSF110083">
    <property type="entry name" value="Peptidylarginine deiminase Pad4, middle domain"/>
    <property type="match status" value="1"/>
</dbReference>